<proteinExistence type="inferred from homology"/>
<sequence>MTVPKEAEGLIGSHYRAPDYFEVGREKIREFALAVKDDHPAHFDESESAAAGYPDMVAPLTFLAIAGRRVQLEIFTKFSIPINIARVIHRDQKFKFHRPILAHDRLYFDTYLDSVIESHGTVLAEIRSEVTDADGKPIVTSVVTMLGEAAHQEADAAATAAAVASISAGKLGAI</sequence>
<feature type="chain" id="PRO_0000216139" description="UPF0336 protein MAP_3996c">
    <location>
        <begin position="1"/>
        <end position="174"/>
    </location>
</feature>
<feature type="domain" description="MaoC-like">
    <location>
        <begin position="11"/>
        <end position="131"/>
    </location>
</feature>
<evidence type="ECO:0000255" key="1">
    <source>
        <dbReference type="HAMAP-Rule" id="MF_00799"/>
    </source>
</evidence>
<protein>
    <recommendedName>
        <fullName evidence="1">UPF0336 protein MAP_3996c</fullName>
    </recommendedName>
</protein>
<reference key="1">
    <citation type="journal article" date="2005" name="Proc. Natl. Acad. Sci. U.S.A.">
        <title>The complete genome sequence of Mycobacterium avium subspecies paratuberculosis.</title>
        <authorList>
            <person name="Li L."/>
            <person name="Bannantine J.P."/>
            <person name="Zhang Q."/>
            <person name="Amonsin A."/>
            <person name="May B.J."/>
            <person name="Alt D."/>
            <person name="Banerji N."/>
            <person name="Kanjilal S."/>
            <person name="Kapur V."/>
        </authorList>
    </citation>
    <scope>NUCLEOTIDE SEQUENCE [LARGE SCALE GENOMIC DNA]</scope>
    <source>
        <strain>ATCC BAA-968 / K-10</strain>
    </source>
</reference>
<accession>Q73SS7</accession>
<dbReference type="EMBL" id="AE016958">
    <property type="protein sequence ID" value="AAS06546.1"/>
    <property type="molecule type" value="Genomic_DNA"/>
</dbReference>
<dbReference type="RefSeq" id="WP_003873705.1">
    <property type="nucleotide sequence ID" value="NZ_CP106873.1"/>
</dbReference>
<dbReference type="SMR" id="Q73SS7"/>
<dbReference type="STRING" id="262316.MAP_3996c"/>
<dbReference type="KEGG" id="mpa:MAP_3996c"/>
<dbReference type="eggNOG" id="COG2030">
    <property type="taxonomic scope" value="Bacteria"/>
</dbReference>
<dbReference type="HOGENOM" id="CLU_116276_0_1_11"/>
<dbReference type="Proteomes" id="UP000000580">
    <property type="component" value="Chromosome"/>
</dbReference>
<dbReference type="GO" id="GO:0019171">
    <property type="term" value="F:(3R)-hydroxyacyl-[acyl-carrier-protein] dehydratase activity"/>
    <property type="evidence" value="ECO:0007669"/>
    <property type="project" value="TreeGrafter"/>
</dbReference>
<dbReference type="GO" id="GO:0006633">
    <property type="term" value="P:fatty acid biosynthetic process"/>
    <property type="evidence" value="ECO:0007669"/>
    <property type="project" value="TreeGrafter"/>
</dbReference>
<dbReference type="CDD" id="cd03441">
    <property type="entry name" value="R_hydratase_like"/>
    <property type="match status" value="1"/>
</dbReference>
<dbReference type="Gene3D" id="3.10.129.10">
    <property type="entry name" value="Hotdog Thioesterase"/>
    <property type="match status" value="1"/>
</dbReference>
<dbReference type="HAMAP" id="MF_00799">
    <property type="entry name" value="UPF0336"/>
    <property type="match status" value="1"/>
</dbReference>
<dbReference type="InterPro" id="IPR039569">
    <property type="entry name" value="FAS1-like_DH_region"/>
</dbReference>
<dbReference type="InterPro" id="IPR016709">
    <property type="entry name" value="HadA-like"/>
</dbReference>
<dbReference type="InterPro" id="IPR029069">
    <property type="entry name" value="HotDog_dom_sf"/>
</dbReference>
<dbReference type="InterPro" id="IPR050965">
    <property type="entry name" value="UPF0336/Enoyl-CoA_hydratase"/>
</dbReference>
<dbReference type="PANTHER" id="PTHR43437:SF3">
    <property type="entry name" value="HYDROXYACYL-THIOESTER DEHYDRATASE TYPE 2, MITOCHONDRIAL"/>
    <property type="match status" value="1"/>
</dbReference>
<dbReference type="PANTHER" id="PTHR43437">
    <property type="entry name" value="HYDROXYACYL-THIOESTER DEHYDRATASE TYPE 2, MITOCHONDRIAL-RELATED"/>
    <property type="match status" value="1"/>
</dbReference>
<dbReference type="Pfam" id="PF13452">
    <property type="entry name" value="FAS1_DH_region"/>
    <property type="match status" value="1"/>
</dbReference>
<dbReference type="PIRSF" id="PIRSF018072">
    <property type="entry name" value="UCP018072"/>
    <property type="match status" value="1"/>
</dbReference>
<dbReference type="SUPFAM" id="SSF54637">
    <property type="entry name" value="Thioesterase/thiol ester dehydrase-isomerase"/>
    <property type="match status" value="1"/>
</dbReference>
<gene>
    <name type="ordered locus">MAP_3996c</name>
</gene>
<comment type="similarity">
    <text evidence="1">Belongs to the UPF0336 family.</text>
</comment>
<organism>
    <name type="scientific">Mycolicibacterium paratuberculosis (strain ATCC BAA-968 / K-10)</name>
    <name type="common">Mycobacterium paratuberculosis</name>
    <dbReference type="NCBI Taxonomy" id="262316"/>
    <lineage>
        <taxon>Bacteria</taxon>
        <taxon>Bacillati</taxon>
        <taxon>Actinomycetota</taxon>
        <taxon>Actinomycetes</taxon>
        <taxon>Mycobacteriales</taxon>
        <taxon>Mycobacteriaceae</taxon>
        <taxon>Mycobacterium</taxon>
        <taxon>Mycobacterium avium complex (MAC)</taxon>
    </lineage>
</organism>
<name>Y3996_MYCPA</name>
<keyword id="KW-1185">Reference proteome</keyword>